<accession>Q5LI41</accession>
<reference key="1">
    <citation type="journal article" date="2005" name="Science">
        <title>Extensive DNA inversions in the B. fragilis genome control variable gene expression.</title>
        <authorList>
            <person name="Cerdeno-Tarraga A.-M."/>
            <person name="Patrick S."/>
            <person name="Crossman L.C."/>
            <person name="Blakely G."/>
            <person name="Abratt V."/>
            <person name="Lennard N."/>
            <person name="Poxton I."/>
            <person name="Duerden B."/>
            <person name="Harris B."/>
            <person name="Quail M.A."/>
            <person name="Barron A."/>
            <person name="Clark L."/>
            <person name="Corton C."/>
            <person name="Doggett J."/>
            <person name="Holden M.T.G."/>
            <person name="Larke N."/>
            <person name="Line A."/>
            <person name="Lord A."/>
            <person name="Norbertczak H."/>
            <person name="Ormond D."/>
            <person name="Price C."/>
            <person name="Rabbinowitsch E."/>
            <person name="Woodward J."/>
            <person name="Barrell B.G."/>
            <person name="Parkhill J."/>
        </authorList>
    </citation>
    <scope>NUCLEOTIDE SEQUENCE [LARGE SCALE GENOMIC DNA]</scope>
    <source>
        <strain>ATCC 25285 / DSM 2151 / CCUG 4856 / JCM 11019 / LMG 10263 / NCTC 9343 / Onslow / VPI 2553 / EN-2</strain>
    </source>
</reference>
<evidence type="ECO:0000255" key="1">
    <source>
        <dbReference type="HAMAP-Rule" id="MF_00020"/>
    </source>
</evidence>
<organism>
    <name type="scientific">Bacteroides fragilis (strain ATCC 25285 / DSM 2151 / CCUG 4856 / JCM 11019 / LMG 10263 / NCTC 9343 / Onslow / VPI 2553 / EN-2)</name>
    <dbReference type="NCBI Taxonomy" id="272559"/>
    <lineage>
        <taxon>Bacteria</taxon>
        <taxon>Pseudomonadati</taxon>
        <taxon>Bacteroidota</taxon>
        <taxon>Bacteroidia</taxon>
        <taxon>Bacteroidales</taxon>
        <taxon>Bacteroidaceae</taxon>
        <taxon>Bacteroides</taxon>
    </lineage>
</organism>
<name>ACKA_BACFN</name>
<protein>
    <recommendedName>
        <fullName evidence="1">Acetate kinase</fullName>
        <ecNumber evidence="1">2.7.2.1</ecNumber>
    </recommendedName>
    <alternativeName>
        <fullName evidence="1">Acetokinase</fullName>
    </alternativeName>
</protein>
<comment type="function">
    <text evidence="1">Catalyzes the formation of acetyl phosphate from acetate and ATP. Can also catalyze the reverse reaction.</text>
</comment>
<comment type="catalytic activity">
    <reaction evidence="1">
        <text>acetate + ATP = acetyl phosphate + ADP</text>
        <dbReference type="Rhea" id="RHEA:11352"/>
        <dbReference type="ChEBI" id="CHEBI:22191"/>
        <dbReference type="ChEBI" id="CHEBI:30089"/>
        <dbReference type="ChEBI" id="CHEBI:30616"/>
        <dbReference type="ChEBI" id="CHEBI:456216"/>
        <dbReference type="EC" id="2.7.2.1"/>
    </reaction>
</comment>
<comment type="cofactor">
    <cofactor evidence="1">
        <name>Mg(2+)</name>
        <dbReference type="ChEBI" id="CHEBI:18420"/>
    </cofactor>
    <cofactor evidence="1">
        <name>Mn(2+)</name>
        <dbReference type="ChEBI" id="CHEBI:29035"/>
    </cofactor>
    <text evidence="1">Mg(2+). Can also accept Mn(2+).</text>
</comment>
<comment type="pathway">
    <text evidence="1">Metabolic intermediate biosynthesis; acetyl-CoA biosynthesis; acetyl-CoA from acetate: step 1/2.</text>
</comment>
<comment type="subunit">
    <text evidence="1">Homodimer.</text>
</comment>
<comment type="subcellular location">
    <subcellularLocation>
        <location evidence="1">Cytoplasm</location>
    </subcellularLocation>
</comment>
<comment type="similarity">
    <text evidence="1">Belongs to the acetokinase family.</text>
</comment>
<sequence>MKVLVLNCGSSSIKYKLFDMDSKEVIAQGGIEKIGLKDSFLKLTLPNGEKKILEKDIPEHTVGVEFILNTLVSPEYGAIQSLEEINAVGHRMVHGGERFSKSVLLTKEVLEAFAACNDLAPLHNPANLKGVDAITAILPNVPQIGVFDTAFHQTMPEHAYLYAIPYELYKKYGVRRYGFHGTSHRYVSQRVCEYLGIKPEGLKLITCHIGNGGSIAAIKDGKCIDTSMGLTPLEGLMMGTRSGDIDAGAVTFIMDKEGLTTTGISNLLNKKSGVAGMMNGSSDMRDLEAAVAKGDPQAILTEQMYFYRIKKYIGAYAAALGGVDVILFTGGVGENQATCRAGVCEGLEFLGVKLDPEKNKVRGEEAIISTDDSRVKVVVIPTDEELLIASDTMAILDK</sequence>
<feature type="chain" id="PRO_1000002209" description="Acetate kinase">
    <location>
        <begin position="1"/>
        <end position="398"/>
    </location>
</feature>
<feature type="active site" description="Proton donor/acceptor" evidence="1">
    <location>
        <position position="148"/>
    </location>
</feature>
<feature type="binding site" evidence="1">
    <location>
        <position position="7"/>
    </location>
    <ligand>
        <name>Mg(2+)</name>
        <dbReference type="ChEBI" id="CHEBI:18420"/>
    </ligand>
</feature>
<feature type="binding site" evidence="1">
    <location>
        <position position="14"/>
    </location>
    <ligand>
        <name>ATP</name>
        <dbReference type="ChEBI" id="CHEBI:30616"/>
    </ligand>
</feature>
<feature type="binding site" evidence="1">
    <location>
        <position position="91"/>
    </location>
    <ligand>
        <name>substrate</name>
    </ligand>
</feature>
<feature type="binding site" evidence="1">
    <location>
        <begin position="208"/>
        <end position="212"/>
    </location>
    <ligand>
        <name>ATP</name>
        <dbReference type="ChEBI" id="CHEBI:30616"/>
    </ligand>
</feature>
<feature type="binding site" evidence="1">
    <location>
        <begin position="283"/>
        <end position="285"/>
    </location>
    <ligand>
        <name>ATP</name>
        <dbReference type="ChEBI" id="CHEBI:30616"/>
    </ligand>
</feature>
<feature type="binding site" evidence="1">
    <location>
        <begin position="331"/>
        <end position="335"/>
    </location>
    <ligand>
        <name>ATP</name>
        <dbReference type="ChEBI" id="CHEBI:30616"/>
    </ligand>
</feature>
<feature type="binding site" evidence="1">
    <location>
        <position position="384"/>
    </location>
    <ligand>
        <name>Mg(2+)</name>
        <dbReference type="ChEBI" id="CHEBI:18420"/>
    </ligand>
</feature>
<feature type="site" description="Transition state stabilizer" evidence="1">
    <location>
        <position position="180"/>
    </location>
</feature>
<feature type="site" description="Transition state stabilizer" evidence="1">
    <location>
        <position position="241"/>
    </location>
</feature>
<keyword id="KW-0067">ATP-binding</keyword>
<keyword id="KW-0963">Cytoplasm</keyword>
<keyword id="KW-0418">Kinase</keyword>
<keyword id="KW-0460">Magnesium</keyword>
<keyword id="KW-0479">Metal-binding</keyword>
<keyword id="KW-0547">Nucleotide-binding</keyword>
<keyword id="KW-0808">Transferase</keyword>
<proteinExistence type="inferred from homology"/>
<gene>
    <name evidence="1" type="primary">ackA</name>
    <name type="ordered locus">BF0424</name>
</gene>
<dbReference type="EC" id="2.7.2.1" evidence="1"/>
<dbReference type="EMBL" id="CR626927">
    <property type="protein sequence ID" value="CAH06187.1"/>
    <property type="molecule type" value="Genomic_DNA"/>
</dbReference>
<dbReference type="RefSeq" id="WP_005784326.1">
    <property type="nucleotide sequence ID" value="NZ_UFTH01000001.1"/>
</dbReference>
<dbReference type="SMR" id="Q5LI41"/>
<dbReference type="PaxDb" id="272559-BF9343_0408"/>
<dbReference type="KEGG" id="bfs:BF9343_0408"/>
<dbReference type="eggNOG" id="COG0282">
    <property type="taxonomic scope" value="Bacteria"/>
</dbReference>
<dbReference type="HOGENOM" id="CLU_020352_0_1_10"/>
<dbReference type="UniPathway" id="UPA00340">
    <property type="reaction ID" value="UER00458"/>
</dbReference>
<dbReference type="Proteomes" id="UP000006731">
    <property type="component" value="Chromosome"/>
</dbReference>
<dbReference type="GO" id="GO:0005737">
    <property type="term" value="C:cytoplasm"/>
    <property type="evidence" value="ECO:0007669"/>
    <property type="project" value="UniProtKB-SubCell"/>
</dbReference>
<dbReference type="GO" id="GO:0008776">
    <property type="term" value="F:acetate kinase activity"/>
    <property type="evidence" value="ECO:0007669"/>
    <property type="project" value="UniProtKB-UniRule"/>
</dbReference>
<dbReference type="GO" id="GO:0005524">
    <property type="term" value="F:ATP binding"/>
    <property type="evidence" value="ECO:0007669"/>
    <property type="project" value="UniProtKB-KW"/>
</dbReference>
<dbReference type="GO" id="GO:0000287">
    <property type="term" value="F:magnesium ion binding"/>
    <property type="evidence" value="ECO:0007669"/>
    <property type="project" value="UniProtKB-UniRule"/>
</dbReference>
<dbReference type="GO" id="GO:0006083">
    <property type="term" value="P:acetate metabolic process"/>
    <property type="evidence" value="ECO:0007669"/>
    <property type="project" value="TreeGrafter"/>
</dbReference>
<dbReference type="GO" id="GO:0006085">
    <property type="term" value="P:acetyl-CoA biosynthetic process"/>
    <property type="evidence" value="ECO:0007669"/>
    <property type="project" value="UniProtKB-UniRule"/>
</dbReference>
<dbReference type="CDD" id="cd24010">
    <property type="entry name" value="ASKHA_NBD_AcK_PK"/>
    <property type="match status" value="1"/>
</dbReference>
<dbReference type="Gene3D" id="3.30.420.40">
    <property type="match status" value="2"/>
</dbReference>
<dbReference type="HAMAP" id="MF_00020">
    <property type="entry name" value="Acetate_kinase"/>
    <property type="match status" value="1"/>
</dbReference>
<dbReference type="InterPro" id="IPR004372">
    <property type="entry name" value="Ac/propionate_kinase"/>
</dbReference>
<dbReference type="InterPro" id="IPR000890">
    <property type="entry name" value="Aliphatic_acid_kin_short-chain"/>
</dbReference>
<dbReference type="InterPro" id="IPR023865">
    <property type="entry name" value="Aliphatic_acid_kinase_CS"/>
</dbReference>
<dbReference type="InterPro" id="IPR043129">
    <property type="entry name" value="ATPase_NBD"/>
</dbReference>
<dbReference type="NCBIfam" id="TIGR00016">
    <property type="entry name" value="ackA"/>
    <property type="match status" value="1"/>
</dbReference>
<dbReference type="PANTHER" id="PTHR21060">
    <property type="entry name" value="ACETATE KINASE"/>
    <property type="match status" value="1"/>
</dbReference>
<dbReference type="PANTHER" id="PTHR21060:SF15">
    <property type="entry name" value="ACETATE KINASE-RELATED"/>
    <property type="match status" value="1"/>
</dbReference>
<dbReference type="Pfam" id="PF00871">
    <property type="entry name" value="Acetate_kinase"/>
    <property type="match status" value="1"/>
</dbReference>
<dbReference type="PIRSF" id="PIRSF000722">
    <property type="entry name" value="Acetate_prop_kin"/>
    <property type="match status" value="1"/>
</dbReference>
<dbReference type="PRINTS" id="PR00471">
    <property type="entry name" value="ACETATEKNASE"/>
</dbReference>
<dbReference type="SUPFAM" id="SSF53067">
    <property type="entry name" value="Actin-like ATPase domain"/>
    <property type="match status" value="2"/>
</dbReference>
<dbReference type="PROSITE" id="PS01075">
    <property type="entry name" value="ACETATE_KINASE_1"/>
    <property type="match status" value="1"/>
</dbReference>
<dbReference type="PROSITE" id="PS01076">
    <property type="entry name" value="ACETATE_KINASE_2"/>
    <property type="match status" value="1"/>
</dbReference>